<comment type="subcellular location">
    <subcellularLocation>
        <location>Cell inner membrane</location>
        <topology>Multi-pass membrane protein</topology>
    </subcellularLocation>
</comment>
<accession>P39284</accession>
<accession>Q2M6E4</accession>
<feature type="chain" id="PRO_0000169741" description="Inner membrane protein YjeO">
    <location>
        <begin position="1"/>
        <end position="104"/>
    </location>
</feature>
<feature type="topological domain" description="Cytoplasmic" evidence="1">
    <location>
        <begin position="1"/>
        <end position="5"/>
    </location>
</feature>
<feature type="transmembrane region" description="Helical" evidence="1">
    <location>
        <begin position="6"/>
        <end position="26"/>
    </location>
</feature>
<feature type="topological domain" description="Periplasmic" evidence="1">
    <location>
        <begin position="27"/>
        <end position="52"/>
    </location>
</feature>
<feature type="transmembrane region" description="Helical" evidence="1">
    <location>
        <begin position="53"/>
        <end position="73"/>
    </location>
</feature>
<feature type="topological domain" description="Cytoplasmic" evidence="1">
    <location>
        <begin position="74"/>
        <end position="77"/>
    </location>
</feature>
<feature type="transmembrane region" description="Helical" evidence="1">
    <location>
        <begin position="78"/>
        <end position="98"/>
    </location>
</feature>
<feature type="topological domain" description="Periplasmic" evidence="1">
    <location>
        <begin position="99"/>
        <end position="104"/>
    </location>
</feature>
<gene>
    <name type="primary">yjeO</name>
    <name type="ordered locus">b4158</name>
    <name type="ordered locus">JW4119</name>
</gene>
<keyword id="KW-0997">Cell inner membrane</keyword>
<keyword id="KW-1003">Cell membrane</keyword>
<keyword id="KW-0472">Membrane</keyword>
<keyword id="KW-1185">Reference proteome</keyword>
<keyword id="KW-0812">Transmembrane</keyword>
<keyword id="KW-1133">Transmembrane helix</keyword>
<proteinExistence type="evidence at protein level"/>
<evidence type="ECO:0000255" key="1"/>
<reference key="1">
    <citation type="journal article" date="1995" name="Nucleic Acids Res.">
        <title>Analysis of the Escherichia coli genome VI: DNA sequence of the region from 92.8 through 100 minutes.</title>
        <authorList>
            <person name="Burland V.D."/>
            <person name="Plunkett G. III"/>
            <person name="Sofia H.J."/>
            <person name="Daniels D.L."/>
            <person name="Blattner F.R."/>
        </authorList>
    </citation>
    <scope>NUCLEOTIDE SEQUENCE [LARGE SCALE GENOMIC DNA]</scope>
    <source>
        <strain>K12 / MG1655 / ATCC 47076</strain>
    </source>
</reference>
<reference key="2">
    <citation type="journal article" date="1997" name="Science">
        <title>The complete genome sequence of Escherichia coli K-12.</title>
        <authorList>
            <person name="Blattner F.R."/>
            <person name="Plunkett G. III"/>
            <person name="Bloch C.A."/>
            <person name="Perna N.T."/>
            <person name="Burland V."/>
            <person name="Riley M."/>
            <person name="Collado-Vides J."/>
            <person name="Glasner J.D."/>
            <person name="Rode C.K."/>
            <person name="Mayhew G.F."/>
            <person name="Gregor J."/>
            <person name="Davis N.W."/>
            <person name="Kirkpatrick H.A."/>
            <person name="Goeden M.A."/>
            <person name="Rose D.J."/>
            <person name="Mau B."/>
            <person name="Shao Y."/>
        </authorList>
    </citation>
    <scope>NUCLEOTIDE SEQUENCE [LARGE SCALE GENOMIC DNA]</scope>
    <source>
        <strain>K12 / MG1655 / ATCC 47076</strain>
    </source>
</reference>
<reference key="3">
    <citation type="journal article" date="2006" name="Mol. Syst. Biol.">
        <title>Highly accurate genome sequences of Escherichia coli K-12 strains MG1655 and W3110.</title>
        <authorList>
            <person name="Hayashi K."/>
            <person name="Morooka N."/>
            <person name="Yamamoto Y."/>
            <person name="Fujita K."/>
            <person name="Isono K."/>
            <person name="Choi S."/>
            <person name="Ohtsubo E."/>
            <person name="Baba T."/>
            <person name="Wanner B.L."/>
            <person name="Mori H."/>
            <person name="Horiuchi T."/>
        </authorList>
    </citation>
    <scope>NUCLEOTIDE SEQUENCE [LARGE SCALE GENOMIC DNA]</scope>
    <source>
        <strain>K12 / W3110 / ATCC 27325 / DSM 5911</strain>
    </source>
</reference>
<reference key="4">
    <citation type="journal article" date="2005" name="Science">
        <title>Global topology analysis of the Escherichia coli inner membrane proteome.</title>
        <authorList>
            <person name="Daley D.O."/>
            <person name="Rapp M."/>
            <person name="Granseth E."/>
            <person name="Melen K."/>
            <person name="Drew D."/>
            <person name="von Heijne G."/>
        </authorList>
    </citation>
    <scope>TOPOLOGY [LARGE SCALE ANALYSIS]</scope>
    <source>
        <strain>K12 / MG1655 / ATCC 47076</strain>
    </source>
</reference>
<name>YJEO_ECOLI</name>
<dbReference type="EMBL" id="U14003">
    <property type="protein sequence ID" value="AAA97057.1"/>
    <property type="molecule type" value="Genomic_DNA"/>
</dbReference>
<dbReference type="EMBL" id="U00096">
    <property type="protein sequence ID" value="AAC77118.1"/>
    <property type="molecule type" value="Genomic_DNA"/>
</dbReference>
<dbReference type="EMBL" id="AP009048">
    <property type="protein sequence ID" value="BAE78162.1"/>
    <property type="molecule type" value="Genomic_DNA"/>
</dbReference>
<dbReference type="PIR" id="S56386">
    <property type="entry name" value="S56386"/>
</dbReference>
<dbReference type="RefSeq" id="NP_418582.1">
    <property type="nucleotide sequence ID" value="NC_000913.3"/>
</dbReference>
<dbReference type="RefSeq" id="WP_001276180.1">
    <property type="nucleotide sequence ID" value="NZ_STEB01000014.1"/>
</dbReference>
<dbReference type="SMR" id="P39284"/>
<dbReference type="BioGRID" id="4262185">
    <property type="interactions" value="6"/>
</dbReference>
<dbReference type="BioGRID" id="852969">
    <property type="interactions" value="3"/>
</dbReference>
<dbReference type="FunCoup" id="P39284">
    <property type="interactions" value="534"/>
</dbReference>
<dbReference type="IntAct" id="P39284">
    <property type="interactions" value="4"/>
</dbReference>
<dbReference type="STRING" id="511145.b4158"/>
<dbReference type="TCDB" id="9.B.444.1.2">
    <property type="family name" value="the uncharacterized yjeo/ygiz (yjeo/ygiz) family"/>
</dbReference>
<dbReference type="PaxDb" id="511145-b4158"/>
<dbReference type="DNASU" id="948677"/>
<dbReference type="EnsemblBacteria" id="AAC77118">
    <property type="protein sequence ID" value="AAC77118"/>
    <property type="gene ID" value="b4158"/>
</dbReference>
<dbReference type="GeneID" id="948677"/>
<dbReference type="KEGG" id="ecj:JW4119"/>
<dbReference type="KEGG" id="eco:b4158"/>
<dbReference type="KEGG" id="ecoc:C3026_22475"/>
<dbReference type="PATRIC" id="fig|511145.12.peg.4292"/>
<dbReference type="EchoBASE" id="EB2370"/>
<dbReference type="eggNOG" id="ENOG50331UJ">
    <property type="taxonomic scope" value="Bacteria"/>
</dbReference>
<dbReference type="HOGENOM" id="CLU_179876_1_0_6"/>
<dbReference type="InParanoid" id="P39284"/>
<dbReference type="OMA" id="NACMAHR"/>
<dbReference type="OrthoDB" id="6594879at2"/>
<dbReference type="PhylomeDB" id="P39284"/>
<dbReference type="BioCyc" id="EcoCyc:G7839-MONOMER"/>
<dbReference type="PRO" id="PR:P39284"/>
<dbReference type="Proteomes" id="UP000000625">
    <property type="component" value="Chromosome"/>
</dbReference>
<dbReference type="GO" id="GO:0005886">
    <property type="term" value="C:plasma membrane"/>
    <property type="evidence" value="ECO:0000314"/>
    <property type="project" value="EcoCyc"/>
</dbReference>
<dbReference type="InterPro" id="IPR022553">
    <property type="entry name" value="DUF2645"/>
</dbReference>
<dbReference type="Pfam" id="PF10840">
    <property type="entry name" value="DUF2645"/>
    <property type="match status" value="1"/>
</dbReference>
<protein>
    <recommendedName>
        <fullName>Inner membrane protein YjeO</fullName>
    </recommendedName>
</protein>
<organism>
    <name type="scientific">Escherichia coli (strain K12)</name>
    <dbReference type="NCBI Taxonomy" id="83333"/>
    <lineage>
        <taxon>Bacteria</taxon>
        <taxon>Pseudomonadati</taxon>
        <taxon>Pseudomonadota</taxon>
        <taxon>Gammaproteobacteria</taxon>
        <taxon>Enterobacterales</taxon>
        <taxon>Enterobacteriaceae</taxon>
        <taxon>Escherichia</taxon>
    </lineage>
</organism>
<sequence length="104" mass="12638">MSARMFVLCCIWFIVAFLWITITSALDKEWMIDGRGINNVCDVLMYLEEDDTRDVGVIMTLPLFFPFLWFALWRKKRGWFMYATALAIFGYWLWQFFLRYQFCL</sequence>